<organism>
    <name type="scientific">Bordetella pertussis (strain Tohama I / ATCC BAA-589 / NCTC 13251)</name>
    <dbReference type="NCBI Taxonomy" id="257313"/>
    <lineage>
        <taxon>Bacteria</taxon>
        <taxon>Pseudomonadati</taxon>
        <taxon>Pseudomonadota</taxon>
        <taxon>Betaproteobacteria</taxon>
        <taxon>Burkholderiales</taxon>
        <taxon>Alcaligenaceae</taxon>
        <taxon>Bordetella</taxon>
    </lineage>
</organism>
<proteinExistence type="inferred from homology"/>
<feature type="chain" id="PRO_0000349542" description="tRNA-specific 2-thiouridylase MnmA">
    <location>
        <begin position="1"/>
        <end position="371"/>
    </location>
</feature>
<feature type="region of interest" description="Interaction with target base in tRNA" evidence="1">
    <location>
        <begin position="100"/>
        <end position="102"/>
    </location>
</feature>
<feature type="region of interest" description="Interaction with tRNA" evidence="1">
    <location>
        <begin position="155"/>
        <end position="157"/>
    </location>
</feature>
<feature type="region of interest" description="Interaction with tRNA" evidence="1">
    <location>
        <begin position="321"/>
        <end position="322"/>
    </location>
</feature>
<feature type="active site" description="Nucleophile" evidence="1">
    <location>
        <position position="105"/>
    </location>
</feature>
<feature type="active site" description="Cysteine persulfide intermediate" evidence="1">
    <location>
        <position position="205"/>
    </location>
</feature>
<feature type="binding site" evidence="1">
    <location>
        <begin position="14"/>
        <end position="21"/>
    </location>
    <ligand>
        <name>ATP</name>
        <dbReference type="ChEBI" id="CHEBI:30616"/>
    </ligand>
</feature>
<feature type="binding site" evidence="1">
    <location>
        <position position="40"/>
    </location>
    <ligand>
        <name>ATP</name>
        <dbReference type="ChEBI" id="CHEBI:30616"/>
    </ligand>
</feature>
<feature type="binding site" evidence="1">
    <location>
        <position position="129"/>
    </location>
    <ligand>
        <name>ATP</name>
        <dbReference type="ChEBI" id="CHEBI:30616"/>
    </ligand>
</feature>
<feature type="site" description="Interaction with tRNA" evidence="1">
    <location>
        <position position="130"/>
    </location>
</feature>
<feature type="site" description="Interaction with tRNA" evidence="1">
    <location>
        <position position="354"/>
    </location>
</feature>
<feature type="disulfide bond" description="Alternate" evidence="1">
    <location>
        <begin position="105"/>
        <end position="205"/>
    </location>
</feature>
<sequence>MPSNPTRKGRVVVGMSGGVDSSVTAWLLKQQGYEVVGLFMKNWEDDDDSEYCSTRQDLLDAASVADLVGVEFEYVNFAAEYKDRVFAEFLREYSAGRTPNPDVLCNAEIKFKAFLDHAMALGAEHIATGHYARVRTVETPAGPRHQLLKALDDTKDQSYFLHRLNQVQLARTLFPLGELRKTEVRRIAHEIGLHNAAKKDSTGICFIGERPFREFLNRYLPSEPGPILTPEGQRVGTHHGLSFYTLGQRKGLGVGGVKGRQRDDGTAEAWYAARKDLARNVLYVVQGHDHPWLLSAQLQAQDASWIAGEPPAAGAYGAKTRYRQADAACRLDQAGGERFALAFEQAQWAVTPGQSAVLYDGEVCLGGGIII</sequence>
<accession>Q7U359</accession>
<name>MNMA_BORPE</name>
<evidence type="ECO:0000255" key="1">
    <source>
        <dbReference type="HAMAP-Rule" id="MF_00144"/>
    </source>
</evidence>
<dbReference type="EC" id="2.8.1.13" evidence="1"/>
<dbReference type="EMBL" id="BX640419">
    <property type="protein sequence ID" value="CAE43165.1"/>
    <property type="molecule type" value="Genomic_DNA"/>
</dbReference>
<dbReference type="RefSeq" id="NP_881477.1">
    <property type="nucleotide sequence ID" value="NC_002929.2"/>
</dbReference>
<dbReference type="RefSeq" id="WP_003813026.1">
    <property type="nucleotide sequence ID" value="NZ_CP039022.1"/>
</dbReference>
<dbReference type="SMR" id="Q7U359"/>
<dbReference type="STRING" id="257313.BP2893"/>
<dbReference type="PaxDb" id="257313-BP2893"/>
<dbReference type="GeneID" id="69602818"/>
<dbReference type="KEGG" id="bpe:BP2893"/>
<dbReference type="PATRIC" id="fig|257313.5.peg.3126"/>
<dbReference type="eggNOG" id="COG0482">
    <property type="taxonomic scope" value="Bacteria"/>
</dbReference>
<dbReference type="HOGENOM" id="CLU_035188_1_0_4"/>
<dbReference type="Proteomes" id="UP000002676">
    <property type="component" value="Chromosome"/>
</dbReference>
<dbReference type="GO" id="GO:0005737">
    <property type="term" value="C:cytoplasm"/>
    <property type="evidence" value="ECO:0007669"/>
    <property type="project" value="UniProtKB-SubCell"/>
</dbReference>
<dbReference type="GO" id="GO:0005524">
    <property type="term" value="F:ATP binding"/>
    <property type="evidence" value="ECO:0007669"/>
    <property type="project" value="UniProtKB-KW"/>
</dbReference>
<dbReference type="GO" id="GO:0000049">
    <property type="term" value="F:tRNA binding"/>
    <property type="evidence" value="ECO:0007669"/>
    <property type="project" value="UniProtKB-KW"/>
</dbReference>
<dbReference type="GO" id="GO:0103016">
    <property type="term" value="F:tRNA-uridine 2-sulfurtransferase activity"/>
    <property type="evidence" value="ECO:0007669"/>
    <property type="project" value="UniProtKB-EC"/>
</dbReference>
<dbReference type="GO" id="GO:0002143">
    <property type="term" value="P:tRNA wobble position uridine thiolation"/>
    <property type="evidence" value="ECO:0007669"/>
    <property type="project" value="TreeGrafter"/>
</dbReference>
<dbReference type="CDD" id="cd01998">
    <property type="entry name" value="MnmA_TRMU-like"/>
    <property type="match status" value="1"/>
</dbReference>
<dbReference type="FunFam" id="2.30.30.280:FF:000001">
    <property type="entry name" value="tRNA-specific 2-thiouridylase MnmA"/>
    <property type="match status" value="1"/>
</dbReference>
<dbReference type="FunFam" id="2.40.30.10:FF:000023">
    <property type="entry name" value="tRNA-specific 2-thiouridylase MnmA"/>
    <property type="match status" value="1"/>
</dbReference>
<dbReference type="FunFam" id="3.40.50.620:FF:000004">
    <property type="entry name" value="tRNA-specific 2-thiouridylase MnmA"/>
    <property type="match status" value="1"/>
</dbReference>
<dbReference type="Gene3D" id="2.30.30.280">
    <property type="entry name" value="Adenine nucleotide alpha hydrolases-like domains"/>
    <property type="match status" value="1"/>
</dbReference>
<dbReference type="Gene3D" id="3.40.50.620">
    <property type="entry name" value="HUPs"/>
    <property type="match status" value="1"/>
</dbReference>
<dbReference type="Gene3D" id="2.40.30.10">
    <property type="entry name" value="Translation factors"/>
    <property type="match status" value="1"/>
</dbReference>
<dbReference type="HAMAP" id="MF_00144">
    <property type="entry name" value="tRNA_thiouridyl_MnmA"/>
    <property type="match status" value="1"/>
</dbReference>
<dbReference type="InterPro" id="IPR004506">
    <property type="entry name" value="MnmA-like"/>
</dbReference>
<dbReference type="InterPro" id="IPR046885">
    <property type="entry name" value="MnmA-like_C"/>
</dbReference>
<dbReference type="InterPro" id="IPR046884">
    <property type="entry name" value="MnmA-like_central"/>
</dbReference>
<dbReference type="InterPro" id="IPR023382">
    <property type="entry name" value="MnmA-like_central_sf"/>
</dbReference>
<dbReference type="InterPro" id="IPR014729">
    <property type="entry name" value="Rossmann-like_a/b/a_fold"/>
</dbReference>
<dbReference type="NCBIfam" id="NF001138">
    <property type="entry name" value="PRK00143.1"/>
    <property type="match status" value="1"/>
</dbReference>
<dbReference type="NCBIfam" id="TIGR00420">
    <property type="entry name" value="trmU"/>
    <property type="match status" value="1"/>
</dbReference>
<dbReference type="PANTHER" id="PTHR11933:SF5">
    <property type="entry name" value="MITOCHONDRIAL TRNA-SPECIFIC 2-THIOURIDYLASE 1"/>
    <property type="match status" value="1"/>
</dbReference>
<dbReference type="PANTHER" id="PTHR11933">
    <property type="entry name" value="TRNA 5-METHYLAMINOMETHYL-2-THIOURIDYLATE -METHYLTRANSFERASE"/>
    <property type="match status" value="1"/>
</dbReference>
<dbReference type="Pfam" id="PF03054">
    <property type="entry name" value="tRNA_Me_trans"/>
    <property type="match status" value="1"/>
</dbReference>
<dbReference type="Pfam" id="PF20258">
    <property type="entry name" value="tRNA_Me_trans_C"/>
    <property type="match status" value="1"/>
</dbReference>
<dbReference type="Pfam" id="PF20259">
    <property type="entry name" value="tRNA_Me_trans_M"/>
    <property type="match status" value="1"/>
</dbReference>
<dbReference type="SUPFAM" id="SSF52402">
    <property type="entry name" value="Adenine nucleotide alpha hydrolases-like"/>
    <property type="match status" value="1"/>
</dbReference>
<keyword id="KW-0067">ATP-binding</keyword>
<keyword id="KW-0963">Cytoplasm</keyword>
<keyword id="KW-1015">Disulfide bond</keyword>
<keyword id="KW-0547">Nucleotide-binding</keyword>
<keyword id="KW-1185">Reference proteome</keyword>
<keyword id="KW-0694">RNA-binding</keyword>
<keyword id="KW-0808">Transferase</keyword>
<keyword id="KW-0819">tRNA processing</keyword>
<keyword id="KW-0820">tRNA-binding</keyword>
<protein>
    <recommendedName>
        <fullName evidence="1">tRNA-specific 2-thiouridylase MnmA</fullName>
        <ecNumber evidence="1">2.8.1.13</ecNumber>
    </recommendedName>
</protein>
<gene>
    <name evidence="1" type="primary">mnmA</name>
    <name type="ordered locus">BP2893</name>
</gene>
<comment type="function">
    <text evidence="1">Catalyzes the 2-thiolation of uridine at the wobble position (U34) of tRNA, leading to the formation of s(2)U34.</text>
</comment>
<comment type="catalytic activity">
    <reaction evidence="1">
        <text>S-sulfanyl-L-cysteinyl-[protein] + uridine(34) in tRNA + AH2 + ATP = 2-thiouridine(34) in tRNA + L-cysteinyl-[protein] + A + AMP + diphosphate + H(+)</text>
        <dbReference type="Rhea" id="RHEA:47032"/>
        <dbReference type="Rhea" id="RHEA-COMP:10131"/>
        <dbReference type="Rhea" id="RHEA-COMP:11726"/>
        <dbReference type="Rhea" id="RHEA-COMP:11727"/>
        <dbReference type="Rhea" id="RHEA-COMP:11728"/>
        <dbReference type="ChEBI" id="CHEBI:13193"/>
        <dbReference type="ChEBI" id="CHEBI:15378"/>
        <dbReference type="ChEBI" id="CHEBI:17499"/>
        <dbReference type="ChEBI" id="CHEBI:29950"/>
        <dbReference type="ChEBI" id="CHEBI:30616"/>
        <dbReference type="ChEBI" id="CHEBI:33019"/>
        <dbReference type="ChEBI" id="CHEBI:61963"/>
        <dbReference type="ChEBI" id="CHEBI:65315"/>
        <dbReference type="ChEBI" id="CHEBI:87170"/>
        <dbReference type="ChEBI" id="CHEBI:456215"/>
        <dbReference type="EC" id="2.8.1.13"/>
    </reaction>
</comment>
<comment type="subcellular location">
    <subcellularLocation>
        <location evidence="1">Cytoplasm</location>
    </subcellularLocation>
</comment>
<comment type="similarity">
    <text evidence="1">Belongs to the MnmA/TRMU family.</text>
</comment>
<reference key="1">
    <citation type="journal article" date="2003" name="Nat. Genet.">
        <title>Comparative analysis of the genome sequences of Bordetella pertussis, Bordetella parapertussis and Bordetella bronchiseptica.</title>
        <authorList>
            <person name="Parkhill J."/>
            <person name="Sebaihia M."/>
            <person name="Preston A."/>
            <person name="Murphy L.D."/>
            <person name="Thomson N.R."/>
            <person name="Harris D.E."/>
            <person name="Holden M.T.G."/>
            <person name="Churcher C.M."/>
            <person name="Bentley S.D."/>
            <person name="Mungall K.L."/>
            <person name="Cerdeno-Tarraga A.-M."/>
            <person name="Temple L."/>
            <person name="James K.D."/>
            <person name="Harris B."/>
            <person name="Quail M.A."/>
            <person name="Achtman M."/>
            <person name="Atkin R."/>
            <person name="Baker S."/>
            <person name="Basham D."/>
            <person name="Bason N."/>
            <person name="Cherevach I."/>
            <person name="Chillingworth T."/>
            <person name="Collins M."/>
            <person name="Cronin A."/>
            <person name="Davis P."/>
            <person name="Doggett J."/>
            <person name="Feltwell T."/>
            <person name="Goble A."/>
            <person name="Hamlin N."/>
            <person name="Hauser H."/>
            <person name="Holroyd S."/>
            <person name="Jagels K."/>
            <person name="Leather S."/>
            <person name="Moule S."/>
            <person name="Norberczak H."/>
            <person name="O'Neil S."/>
            <person name="Ormond D."/>
            <person name="Price C."/>
            <person name="Rabbinowitsch E."/>
            <person name="Rutter S."/>
            <person name="Sanders M."/>
            <person name="Saunders D."/>
            <person name="Seeger K."/>
            <person name="Sharp S."/>
            <person name="Simmonds M."/>
            <person name="Skelton J."/>
            <person name="Squares R."/>
            <person name="Squares S."/>
            <person name="Stevens K."/>
            <person name="Unwin L."/>
            <person name="Whitehead S."/>
            <person name="Barrell B.G."/>
            <person name="Maskell D.J."/>
        </authorList>
    </citation>
    <scope>NUCLEOTIDE SEQUENCE [LARGE SCALE GENOMIC DNA]</scope>
    <source>
        <strain>Tohama I / ATCC BAA-589 / NCTC 13251</strain>
    </source>
</reference>